<keyword id="KW-1185">Reference proteome</keyword>
<keyword id="KW-0687">Ribonucleoprotein</keyword>
<keyword id="KW-0689">Ribosomal protein</keyword>
<organism>
    <name type="scientific">Gluconacetobacter diazotrophicus (strain ATCC 49037 / DSM 5601 / CCUG 37298 / CIP 103539 / LMG 7603 / PAl5)</name>
    <dbReference type="NCBI Taxonomy" id="272568"/>
    <lineage>
        <taxon>Bacteria</taxon>
        <taxon>Pseudomonadati</taxon>
        <taxon>Pseudomonadota</taxon>
        <taxon>Alphaproteobacteria</taxon>
        <taxon>Acetobacterales</taxon>
        <taxon>Acetobacteraceae</taxon>
        <taxon>Gluconacetobacter</taxon>
    </lineage>
</organism>
<protein>
    <recommendedName>
        <fullName evidence="1">Small ribosomal subunit protein uS10</fullName>
    </recommendedName>
    <alternativeName>
        <fullName evidence="2">30S ribosomal protein S10</fullName>
    </alternativeName>
</protein>
<gene>
    <name evidence="1" type="primary">rpsJ</name>
    <name type="ordered locus">GDI3405</name>
    <name type="ordered locus">Gdia_2965</name>
</gene>
<dbReference type="EMBL" id="AM889285">
    <property type="protein sequence ID" value="CAP57348.1"/>
    <property type="molecule type" value="Genomic_DNA"/>
</dbReference>
<dbReference type="EMBL" id="CP001189">
    <property type="protein sequence ID" value="ACI52695.1"/>
    <property type="molecule type" value="Genomic_DNA"/>
</dbReference>
<dbReference type="RefSeq" id="WP_012227960.1">
    <property type="nucleotide sequence ID" value="NC_011365.1"/>
</dbReference>
<dbReference type="SMR" id="A9H3R6"/>
<dbReference type="STRING" id="272568.GDI3405"/>
<dbReference type="KEGG" id="gdi:GDI3405"/>
<dbReference type="KEGG" id="gdj:Gdia_2965"/>
<dbReference type="eggNOG" id="COG0051">
    <property type="taxonomic scope" value="Bacteria"/>
</dbReference>
<dbReference type="HOGENOM" id="CLU_122625_1_3_5"/>
<dbReference type="OrthoDB" id="9804464at2"/>
<dbReference type="Proteomes" id="UP000001176">
    <property type="component" value="Chromosome"/>
</dbReference>
<dbReference type="GO" id="GO:1990904">
    <property type="term" value="C:ribonucleoprotein complex"/>
    <property type="evidence" value="ECO:0007669"/>
    <property type="project" value="UniProtKB-KW"/>
</dbReference>
<dbReference type="GO" id="GO:0005840">
    <property type="term" value="C:ribosome"/>
    <property type="evidence" value="ECO:0007669"/>
    <property type="project" value="UniProtKB-KW"/>
</dbReference>
<dbReference type="GO" id="GO:0003735">
    <property type="term" value="F:structural constituent of ribosome"/>
    <property type="evidence" value="ECO:0007669"/>
    <property type="project" value="InterPro"/>
</dbReference>
<dbReference type="GO" id="GO:0000049">
    <property type="term" value="F:tRNA binding"/>
    <property type="evidence" value="ECO:0007669"/>
    <property type="project" value="UniProtKB-UniRule"/>
</dbReference>
<dbReference type="GO" id="GO:0006412">
    <property type="term" value="P:translation"/>
    <property type="evidence" value="ECO:0007669"/>
    <property type="project" value="UniProtKB-UniRule"/>
</dbReference>
<dbReference type="FunFam" id="3.30.70.600:FF:000001">
    <property type="entry name" value="30S ribosomal protein S10"/>
    <property type="match status" value="1"/>
</dbReference>
<dbReference type="Gene3D" id="3.30.70.600">
    <property type="entry name" value="Ribosomal protein S10 domain"/>
    <property type="match status" value="1"/>
</dbReference>
<dbReference type="HAMAP" id="MF_00508">
    <property type="entry name" value="Ribosomal_uS10"/>
    <property type="match status" value="1"/>
</dbReference>
<dbReference type="InterPro" id="IPR001848">
    <property type="entry name" value="Ribosomal_uS10"/>
</dbReference>
<dbReference type="InterPro" id="IPR018268">
    <property type="entry name" value="Ribosomal_uS10_CS"/>
</dbReference>
<dbReference type="InterPro" id="IPR027486">
    <property type="entry name" value="Ribosomal_uS10_dom"/>
</dbReference>
<dbReference type="InterPro" id="IPR036838">
    <property type="entry name" value="Ribosomal_uS10_dom_sf"/>
</dbReference>
<dbReference type="NCBIfam" id="NF001861">
    <property type="entry name" value="PRK00596.1"/>
    <property type="match status" value="1"/>
</dbReference>
<dbReference type="NCBIfam" id="TIGR01049">
    <property type="entry name" value="rpsJ_bact"/>
    <property type="match status" value="1"/>
</dbReference>
<dbReference type="PANTHER" id="PTHR11700">
    <property type="entry name" value="30S RIBOSOMAL PROTEIN S10 FAMILY MEMBER"/>
    <property type="match status" value="1"/>
</dbReference>
<dbReference type="Pfam" id="PF00338">
    <property type="entry name" value="Ribosomal_S10"/>
    <property type="match status" value="1"/>
</dbReference>
<dbReference type="PRINTS" id="PR00971">
    <property type="entry name" value="RIBOSOMALS10"/>
</dbReference>
<dbReference type="SMART" id="SM01403">
    <property type="entry name" value="Ribosomal_S10"/>
    <property type="match status" value="1"/>
</dbReference>
<dbReference type="SUPFAM" id="SSF54999">
    <property type="entry name" value="Ribosomal protein S10"/>
    <property type="match status" value="1"/>
</dbReference>
<dbReference type="PROSITE" id="PS00361">
    <property type="entry name" value="RIBOSOMAL_S10"/>
    <property type="match status" value="1"/>
</dbReference>
<sequence length="102" mass="11747">MDNQNIRIRLKAYDHRVLDNSTKEIVNTAKRTGARVRGPIPLPTHIEKFTVNRSPHVDKKSREQFEIRTHRRLLDIVEPTPQTVDALMKLDLAAGVDVEIKL</sequence>
<accession>A9H3R6</accession>
<accession>B5ZIG2</accession>
<reference key="1">
    <citation type="journal article" date="2009" name="BMC Genomics">
        <title>Complete genome sequence of the sugarcane nitrogen-fixing endophyte Gluconacetobacter diazotrophicus Pal5.</title>
        <authorList>
            <person name="Bertalan M."/>
            <person name="Albano R."/>
            <person name="de Padua V."/>
            <person name="Rouws L."/>
            <person name="Rojas C."/>
            <person name="Hemerly A."/>
            <person name="Teixeira K."/>
            <person name="Schwab S."/>
            <person name="Araujo J."/>
            <person name="Oliveira A."/>
            <person name="Franca L."/>
            <person name="Magalhaes V."/>
            <person name="Alqueres S."/>
            <person name="Cardoso A."/>
            <person name="Almeida W."/>
            <person name="Loureiro M.M."/>
            <person name="Nogueira E."/>
            <person name="Cidade D."/>
            <person name="Oliveira D."/>
            <person name="Simao T."/>
            <person name="Macedo J."/>
            <person name="Valadao A."/>
            <person name="Dreschsel M."/>
            <person name="Freitas F."/>
            <person name="Vidal M."/>
            <person name="Guedes H."/>
            <person name="Rodrigues E."/>
            <person name="Meneses C."/>
            <person name="Brioso P."/>
            <person name="Pozzer L."/>
            <person name="Figueiredo D."/>
            <person name="Montano H."/>
            <person name="Junior J."/>
            <person name="de Souza Filho G."/>
            <person name="Martin Quintana Flores V."/>
            <person name="Ferreira B."/>
            <person name="Branco A."/>
            <person name="Gonzalez P."/>
            <person name="Guillobel H."/>
            <person name="Lemos M."/>
            <person name="Seibel L."/>
            <person name="Macedo J."/>
            <person name="Alves-Ferreira M."/>
            <person name="Sachetto-Martins G."/>
            <person name="Coelho A."/>
            <person name="Santos E."/>
            <person name="Amaral G."/>
            <person name="Neves A."/>
            <person name="Pacheco A.B."/>
            <person name="Carvalho D."/>
            <person name="Lery L."/>
            <person name="Bisch P."/>
            <person name="Rossle S.C."/>
            <person name="Urmenyi T."/>
            <person name="Rael Pereira A."/>
            <person name="Silva R."/>
            <person name="Rondinelli E."/>
            <person name="von Kruger W."/>
            <person name="Martins O."/>
            <person name="Baldani J.I."/>
            <person name="Ferreira P.C."/>
        </authorList>
    </citation>
    <scope>NUCLEOTIDE SEQUENCE [LARGE SCALE GENOMIC DNA]</scope>
    <source>
        <strain>ATCC 49037 / DSM 5601 / CCUG 37298 / CIP 103539 / LMG 7603 / PAl5</strain>
    </source>
</reference>
<reference key="2">
    <citation type="journal article" date="2010" name="Stand. Genomic Sci.">
        <title>Two genome sequences of the same bacterial strain, Gluconacetobacter diazotrophicus PAl 5, suggest a new standard in genome sequence submission.</title>
        <authorList>
            <person name="Giongo A."/>
            <person name="Tyler H.L."/>
            <person name="Zipperer U.N."/>
            <person name="Triplett E.W."/>
        </authorList>
    </citation>
    <scope>NUCLEOTIDE SEQUENCE [LARGE SCALE GENOMIC DNA]</scope>
    <source>
        <strain>ATCC 49037 / DSM 5601 / CCUG 37298 / CIP 103539 / LMG 7603 / PAl5</strain>
    </source>
</reference>
<feature type="chain" id="PRO_1000081551" description="Small ribosomal subunit protein uS10">
    <location>
        <begin position="1"/>
        <end position="102"/>
    </location>
</feature>
<evidence type="ECO:0000255" key="1">
    <source>
        <dbReference type="HAMAP-Rule" id="MF_00508"/>
    </source>
</evidence>
<evidence type="ECO:0000305" key="2"/>
<name>RS10_GLUDA</name>
<comment type="function">
    <text evidence="1">Involved in the binding of tRNA to the ribosomes.</text>
</comment>
<comment type="subunit">
    <text evidence="1">Part of the 30S ribosomal subunit.</text>
</comment>
<comment type="similarity">
    <text evidence="1">Belongs to the universal ribosomal protein uS10 family.</text>
</comment>
<proteinExistence type="inferred from homology"/>